<evidence type="ECO:0000250" key="1"/>
<evidence type="ECO:0000255" key="2"/>
<evidence type="ECO:0000305" key="3"/>
<sequence>MSSAAHDNHGAGHGSLGSYAIGFVLSVILTAIPFYMVMDGGFSRHATILTMVVLGLVQVVVHLICFLHMNMSSEGRWNVMAFIFTVIVILLVVGLSLWIIFSADMLMMPMP</sequence>
<organism>
    <name type="scientific">Pseudomonas aeruginosa (strain ATCC 15692 / DSM 22644 / CIP 104116 / JCM 14847 / LMG 12228 / 1C / PRS 101 / PAO1)</name>
    <dbReference type="NCBI Taxonomy" id="208964"/>
    <lineage>
        <taxon>Bacteria</taxon>
        <taxon>Pseudomonadati</taxon>
        <taxon>Pseudomonadota</taxon>
        <taxon>Gammaproteobacteria</taxon>
        <taxon>Pseudomonadales</taxon>
        <taxon>Pseudomonadaceae</taxon>
        <taxon>Pseudomonas</taxon>
    </lineage>
</organism>
<gene>
    <name type="primary">cyoD</name>
    <name type="ordered locus">PA1320</name>
</gene>
<dbReference type="EMBL" id="AE004091">
    <property type="protein sequence ID" value="AAG04709.1"/>
    <property type="molecule type" value="Genomic_DNA"/>
</dbReference>
<dbReference type="PIR" id="G83480">
    <property type="entry name" value="G83480"/>
</dbReference>
<dbReference type="RefSeq" id="NP_250011.1">
    <property type="nucleotide sequence ID" value="NC_002516.2"/>
</dbReference>
<dbReference type="RefSeq" id="WP_003109258.1">
    <property type="nucleotide sequence ID" value="NZ_QZGE01000005.1"/>
</dbReference>
<dbReference type="SMR" id="Q9I424"/>
<dbReference type="FunCoup" id="Q9I424">
    <property type="interactions" value="82"/>
</dbReference>
<dbReference type="STRING" id="208964.PA1320"/>
<dbReference type="PaxDb" id="208964-PA1320"/>
<dbReference type="GeneID" id="77222106"/>
<dbReference type="GeneID" id="881604"/>
<dbReference type="KEGG" id="pae:PA1320"/>
<dbReference type="PATRIC" id="fig|208964.12.peg.1372"/>
<dbReference type="PseudoCAP" id="PA1320"/>
<dbReference type="HOGENOM" id="CLU_140945_1_1_6"/>
<dbReference type="InParanoid" id="Q9I424"/>
<dbReference type="OrthoDB" id="2375888at2"/>
<dbReference type="PhylomeDB" id="Q9I424"/>
<dbReference type="BioCyc" id="PAER208964:G1FZ6-1345-MONOMER"/>
<dbReference type="Proteomes" id="UP000002438">
    <property type="component" value="Chromosome"/>
</dbReference>
<dbReference type="GO" id="GO:0009319">
    <property type="term" value="C:cytochrome o ubiquinol oxidase complex"/>
    <property type="evidence" value="ECO:0000318"/>
    <property type="project" value="GO_Central"/>
</dbReference>
<dbReference type="GO" id="GO:0005886">
    <property type="term" value="C:plasma membrane"/>
    <property type="evidence" value="ECO:0000318"/>
    <property type="project" value="GO_Central"/>
</dbReference>
<dbReference type="GO" id="GO:0009486">
    <property type="term" value="F:cytochrome bo3 ubiquinol oxidase activity"/>
    <property type="evidence" value="ECO:0000318"/>
    <property type="project" value="GO_Central"/>
</dbReference>
<dbReference type="GO" id="GO:0015078">
    <property type="term" value="F:proton transmembrane transporter activity"/>
    <property type="evidence" value="ECO:0000318"/>
    <property type="project" value="GO_Central"/>
</dbReference>
<dbReference type="GO" id="GO:0019646">
    <property type="term" value="P:aerobic electron transport chain"/>
    <property type="evidence" value="ECO:0000318"/>
    <property type="project" value="GO_Central"/>
</dbReference>
<dbReference type="GO" id="GO:0015990">
    <property type="term" value="P:electron transport coupled proton transport"/>
    <property type="evidence" value="ECO:0000318"/>
    <property type="project" value="GO_Central"/>
</dbReference>
<dbReference type="InterPro" id="IPR005171">
    <property type="entry name" value="Cyt_c_oxidase_su4_prok"/>
</dbReference>
<dbReference type="InterPro" id="IPR014210">
    <property type="entry name" value="Cyt_o_ubiqinol_oxidase_su4"/>
</dbReference>
<dbReference type="InterPro" id="IPR050968">
    <property type="entry name" value="Cytochrome_c_oxidase_bac_sub4"/>
</dbReference>
<dbReference type="NCBIfam" id="TIGR02847">
    <property type="entry name" value="CyoD"/>
    <property type="match status" value="1"/>
</dbReference>
<dbReference type="PANTHER" id="PTHR36835">
    <property type="entry name" value="CYTOCHROME BO(3) UBIQUINOL OXIDASE SUBUNIT 4"/>
    <property type="match status" value="1"/>
</dbReference>
<dbReference type="PANTHER" id="PTHR36835:SF1">
    <property type="entry name" value="CYTOCHROME BO(3) UBIQUINOL OXIDASE SUBUNIT 4"/>
    <property type="match status" value="1"/>
</dbReference>
<dbReference type="Pfam" id="PF03626">
    <property type="entry name" value="COX4_pro"/>
    <property type="match status" value="1"/>
</dbReference>
<protein>
    <recommendedName>
        <fullName>Cytochrome bo(3) ubiquinol oxidase subunit 4</fullName>
    </recommendedName>
    <alternativeName>
        <fullName>Cytochrome o ubiquinol oxidase subunit 4</fullName>
        <shortName>Cytochrome o subunit 4</shortName>
    </alternativeName>
    <alternativeName>
        <fullName>Oxidase bo(3) subunit 4</fullName>
    </alternativeName>
    <alternativeName>
        <fullName>Ubiquinol oxidase polypeptide IV</fullName>
    </alternativeName>
    <alternativeName>
        <fullName>Ubiquinol oxidase subunit 4</fullName>
    </alternativeName>
</protein>
<feature type="chain" id="PRO_0000287758" description="Cytochrome bo(3) ubiquinol oxidase subunit 4">
    <location>
        <begin position="1"/>
        <end position="111"/>
    </location>
</feature>
<feature type="topological domain" description="Cytoplasmic" evidence="2">
    <location>
        <begin position="1"/>
        <end position="17"/>
    </location>
</feature>
<feature type="transmembrane region" description="Helical" evidence="2">
    <location>
        <begin position="18"/>
        <end position="38"/>
    </location>
</feature>
<feature type="topological domain" description="Periplasmic" evidence="2">
    <location>
        <begin position="39"/>
        <end position="46"/>
    </location>
</feature>
<feature type="transmembrane region" description="Helical" evidence="2">
    <location>
        <begin position="47"/>
        <end position="67"/>
    </location>
</feature>
<feature type="topological domain" description="Cytoplasmic" evidence="2">
    <location>
        <begin position="68"/>
        <end position="80"/>
    </location>
</feature>
<feature type="transmembrane region" description="Helical" evidence="2">
    <location>
        <begin position="81"/>
        <end position="101"/>
    </location>
</feature>
<feature type="topological domain" description="Periplasmic" evidence="2">
    <location>
        <begin position="102"/>
        <end position="111"/>
    </location>
</feature>
<name>CYOD_PSEAE</name>
<reference key="1">
    <citation type="journal article" date="2000" name="Nature">
        <title>Complete genome sequence of Pseudomonas aeruginosa PAO1, an opportunistic pathogen.</title>
        <authorList>
            <person name="Stover C.K."/>
            <person name="Pham X.-Q.T."/>
            <person name="Erwin A.L."/>
            <person name="Mizoguchi S.D."/>
            <person name="Warrener P."/>
            <person name="Hickey M.J."/>
            <person name="Brinkman F.S.L."/>
            <person name="Hufnagle W.O."/>
            <person name="Kowalik D.J."/>
            <person name="Lagrou M."/>
            <person name="Garber R.L."/>
            <person name="Goltry L."/>
            <person name="Tolentino E."/>
            <person name="Westbrock-Wadman S."/>
            <person name="Yuan Y."/>
            <person name="Brody L.L."/>
            <person name="Coulter S.N."/>
            <person name="Folger K.R."/>
            <person name="Kas A."/>
            <person name="Larbig K."/>
            <person name="Lim R.M."/>
            <person name="Smith K.A."/>
            <person name="Spencer D.H."/>
            <person name="Wong G.K.-S."/>
            <person name="Wu Z."/>
            <person name="Paulsen I.T."/>
            <person name="Reizer J."/>
            <person name="Saier M.H. Jr."/>
            <person name="Hancock R.E.W."/>
            <person name="Lory S."/>
            <person name="Olson M.V."/>
        </authorList>
    </citation>
    <scope>NUCLEOTIDE SEQUENCE [LARGE SCALE GENOMIC DNA]</scope>
    <source>
        <strain>ATCC 15692 / DSM 22644 / CIP 104116 / JCM 14847 / LMG 12228 / 1C / PRS 101 / PAO1</strain>
    </source>
</reference>
<proteinExistence type="inferred from homology"/>
<keyword id="KW-0997">Cell inner membrane</keyword>
<keyword id="KW-1003">Cell membrane</keyword>
<keyword id="KW-0249">Electron transport</keyword>
<keyword id="KW-0472">Membrane</keyword>
<keyword id="KW-0560">Oxidoreductase</keyword>
<keyword id="KW-1185">Reference proteome</keyword>
<keyword id="KW-0812">Transmembrane</keyword>
<keyword id="KW-1133">Transmembrane helix</keyword>
<keyword id="KW-0813">Transport</keyword>
<comment type="function">
    <text evidence="1">Cytochrome bo(3) ubiquinol terminal oxidase is the component of the aerobic respiratory chain of E.coli that predominates when cells are grown at high aeration. Has proton pump activity across the membrane in addition to electron transfer, pumping 2 protons/electron (By similarity).</text>
</comment>
<comment type="subunit">
    <text evidence="1">Heterooctamer of two A chains, two B chains, two C chains and two D chains.</text>
</comment>
<comment type="subcellular location">
    <subcellularLocation>
        <location evidence="1">Cell inner membrane</location>
        <topology evidence="1">Multi-pass membrane protein</topology>
    </subcellularLocation>
</comment>
<comment type="similarity">
    <text evidence="3">Belongs to the cytochrome c oxidase bacterial subunit 4 family.</text>
</comment>
<accession>Q9I424</accession>